<reference key="1">
    <citation type="journal article" date="2007" name="J. Bacteriol.">
        <title>The complete genome sequence of Bacillus thuringiensis Al Hakam.</title>
        <authorList>
            <person name="Challacombe J.F."/>
            <person name="Altherr M.R."/>
            <person name="Xie G."/>
            <person name="Bhotika S.S."/>
            <person name="Brown N."/>
            <person name="Bruce D."/>
            <person name="Campbell C.S."/>
            <person name="Campbell M.L."/>
            <person name="Chen J."/>
            <person name="Chertkov O."/>
            <person name="Cleland C."/>
            <person name="Dimitrijevic M."/>
            <person name="Doggett N.A."/>
            <person name="Fawcett J.J."/>
            <person name="Glavina T."/>
            <person name="Goodwin L.A."/>
            <person name="Green L.D."/>
            <person name="Han C.S."/>
            <person name="Hill K.K."/>
            <person name="Hitchcock P."/>
            <person name="Jackson P.J."/>
            <person name="Keim P."/>
            <person name="Kewalramani A.R."/>
            <person name="Longmire J."/>
            <person name="Lucas S."/>
            <person name="Malfatti S."/>
            <person name="Martinez D."/>
            <person name="McMurry K."/>
            <person name="Meincke L.J."/>
            <person name="Misra M."/>
            <person name="Moseman B.L."/>
            <person name="Mundt M."/>
            <person name="Munk A.C."/>
            <person name="Okinaka R.T."/>
            <person name="Parson-Quintana B."/>
            <person name="Reilly L.P."/>
            <person name="Richardson P."/>
            <person name="Robinson D.L."/>
            <person name="Saunders E."/>
            <person name="Tapia R."/>
            <person name="Tesmer J.G."/>
            <person name="Thayer N."/>
            <person name="Thompson L.S."/>
            <person name="Tice H."/>
            <person name="Ticknor L.O."/>
            <person name="Wills P.L."/>
            <person name="Gilna P."/>
            <person name="Brettin T.S."/>
        </authorList>
    </citation>
    <scope>NUCLEOTIDE SEQUENCE [LARGE SCALE GENOMIC DNA]</scope>
    <source>
        <strain>Al Hakam</strain>
    </source>
</reference>
<gene>
    <name evidence="1" type="primary">coaD</name>
    <name type="ordered locus">BALH_3558</name>
</gene>
<evidence type="ECO:0000255" key="1">
    <source>
        <dbReference type="HAMAP-Rule" id="MF_00151"/>
    </source>
</evidence>
<dbReference type="EC" id="2.7.7.3" evidence="1"/>
<dbReference type="EMBL" id="CP000485">
    <property type="protein sequence ID" value="ABK86792.1"/>
    <property type="molecule type" value="Genomic_DNA"/>
</dbReference>
<dbReference type="RefSeq" id="WP_000200598.1">
    <property type="nucleotide sequence ID" value="NC_008600.1"/>
</dbReference>
<dbReference type="SMR" id="A0RHU9"/>
<dbReference type="GeneID" id="92799798"/>
<dbReference type="KEGG" id="btl:BALH_3558"/>
<dbReference type="HOGENOM" id="CLU_100149_0_1_9"/>
<dbReference type="UniPathway" id="UPA00241">
    <property type="reaction ID" value="UER00355"/>
</dbReference>
<dbReference type="GO" id="GO:0005737">
    <property type="term" value="C:cytoplasm"/>
    <property type="evidence" value="ECO:0007669"/>
    <property type="project" value="UniProtKB-SubCell"/>
</dbReference>
<dbReference type="GO" id="GO:0005524">
    <property type="term" value="F:ATP binding"/>
    <property type="evidence" value="ECO:0007669"/>
    <property type="project" value="UniProtKB-KW"/>
</dbReference>
<dbReference type="GO" id="GO:0004595">
    <property type="term" value="F:pantetheine-phosphate adenylyltransferase activity"/>
    <property type="evidence" value="ECO:0007669"/>
    <property type="project" value="UniProtKB-UniRule"/>
</dbReference>
<dbReference type="GO" id="GO:0015937">
    <property type="term" value="P:coenzyme A biosynthetic process"/>
    <property type="evidence" value="ECO:0007669"/>
    <property type="project" value="UniProtKB-UniRule"/>
</dbReference>
<dbReference type="CDD" id="cd02163">
    <property type="entry name" value="PPAT"/>
    <property type="match status" value="1"/>
</dbReference>
<dbReference type="FunFam" id="3.40.50.620:FF:000012">
    <property type="entry name" value="Phosphopantetheine adenylyltransferase"/>
    <property type="match status" value="1"/>
</dbReference>
<dbReference type="Gene3D" id="3.40.50.620">
    <property type="entry name" value="HUPs"/>
    <property type="match status" value="1"/>
</dbReference>
<dbReference type="HAMAP" id="MF_00151">
    <property type="entry name" value="PPAT_bact"/>
    <property type="match status" value="1"/>
</dbReference>
<dbReference type="InterPro" id="IPR004821">
    <property type="entry name" value="Cyt_trans-like"/>
</dbReference>
<dbReference type="InterPro" id="IPR001980">
    <property type="entry name" value="PPAT"/>
</dbReference>
<dbReference type="InterPro" id="IPR014729">
    <property type="entry name" value="Rossmann-like_a/b/a_fold"/>
</dbReference>
<dbReference type="NCBIfam" id="TIGR01510">
    <property type="entry name" value="coaD_prev_kdtB"/>
    <property type="match status" value="1"/>
</dbReference>
<dbReference type="NCBIfam" id="TIGR00125">
    <property type="entry name" value="cyt_tran_rel"/>
    <property type="match status" value="1"/>
</dbReference>
<dbReference type="PANTHER" id="PTHR21342">
    <property type="entry name" value="PHOSPHOPANTETHEINE ADENYLYLTRANSFERASE"/>
    <property type="match status" value="1"/>
</dbReference>
<dbReference type="PANTHER" id="PTHR21342:SF1">
    <property type="entry name" value="PHOSPHOPANTETHEINE ADENYLYLTRANSFERASE"/>
    <property type="match status" value="1"/>
</dbReference>
<dbReference type="Pfam" id="PF01467">
    <property type="entry name" value="CTP_transf_like"/>
    <property type="match status" value="1"/>
</dbReference>
<dbReference type="PRINTS" id="PR01020">
    <property type="entry name" value="LPSBIOSNTHSS"/>
</dbReference>
<dbReference type="SUPFAM" id="SSF52374">
    <property type="entry name" value="Nucleotidylyl transferase"/>
    <property type="match status" value="1"/>
</dbReference>
<comment type="function">
    <text evidence="1">Reversibly transfers an adenylyl group from ATP to 4'-phosphopantetheine, yielding dephospho-CoA (dPCoA) and pyrophosphate.</text>
</comment>
<comment type="catalytic activity">
    <reaction evidence="1">
        <text>(R)-4'-phosphopantetheine + ATP + H(+) = 3'-dephospho-CoA + diphosphate</text>
        <dbReference type="Rhea" id="RHEA:19801"/>
        <dbReference type="ChEBI" id="CHEBI:15378"/>
        <dbReference type="ChEBI" id="CHEBI:30616"/>
        <dbReference type="ChEBI" id="CHEBI:33019"/>
        <dbReference type="ChEBI" id="CHEBI:57328"/>
        <dbReference type="ChEBI" id="CHEBI:61723"/>
        <dbReference type="EC" id="2.7.7.3"/>
    </reaction>
</comment>
<comment type="cofactor">
    <cofactor evidence="1">
        <name>Mg(2+)</name>
        <dbReference type="ChEBI" id="CHEBI:18420"/>
    </cofactor>
</comment>
<comment type="pathway">
    <text evidence="1">Cofactor biosynthesis; coenzyme A biosynthesis; CoA from (R)-pantothenate: step 4/5.</text>
</comment>
<comment type="subunit">
    <text evidence="1">Homohexamer.</text>
</comment>
<comment type="subcellular location">
    <subcellularLocation>
        <location evidence="1">Cytoplasm</location>
    </subcellularLocation>
</comment>
<comment type="similarity">
    <text evidence="1">Belongs to the bacterial CoaD family.</text>
</comment>
<sequence>MTSIAISSGSFDPITLGHLDIIKRGAKVFDEVYVVVLNNSSKKPFFSVEERLDLIREATKDIPNVKVDSHSGLLVEYAKMRNANAILRGLRAVSDFEYEMQITSMNRKLDENIETFFIMTNNQYSFLSSSIVKEVARYGGSVVDLVPPVVERALKEKFQTPLK</sequence>
<feature type="chain" id="PRO_1000011092" description="Phosphopantetheine adenylyltransferase">
    <location>
        <begin position="1"/>
        <end position="163"/>
    </location>
</feature>
<feature type="binding site" evidence="1">
    <location>
        <begin position="10"/>
        <end position="11"/>
    </location>
    <ligand>
        <name>ATP</name>
        <dbReference type="ChEBI" id="CHEBI:30616"/>
    </ligand>
</feature>
<feature type="binding site" evidence="1">
    <location>
        <position position="10"/>
    </location>
    <ligand>
        <name>substrate</name>
    </ligand>
</feature>
<feature type="binding site" evidence="1">
    <location>
        <position position="18"/>
    </location>
    <ligand>
        <name>ATP</name>
        <dbReference type="ChEBI" id="CHEBI:30616"/>
    </ligand>
</feature>
<feature type="binding site" evidence="1">
    <location>
        <position position="42"/>
    </location>
    <ligand>
        <name>substrate</name>
    </ligand>
</feature>
<feature type="binding site" evidence="1">
    <location>
        <position position="74"/>
    </location>
    <ligand>
        <name>substrate</name>
    </ligand>
</feature>
<feature type="binding site" evidence="1">
    <location>
        <position position="88"/>
    </location>
    <ligand>
        <name>substrate</name>
    </ligand>
</feature>
<feature type="binding site" evidence="1">
    <location>
        <begin position="89"/>
        <end position="91"/>
    </location>
    <ligand>
        <name>ATP</name>
        <dbReference type="ChEBI" id="CHEBI:30616"/>
    </ligand>
</feature>
<feature type="binding site" evidence="1">
    <location>
        <position position="99"/>
    </location>
    <ligand>
        <name>ATP</name>
        <dbReference type="ChEBI" id="CHEBI:30616"/>
    </ligand>
</feature>
<feature type="binding site" evidence="1">
    <location>
        <begin position="124"/>
        <end position="130"/>
    </location>
    <ligand>
        <name>ATP</name>
        <dbReference type="ChEBI" id="CHEBI:30616"/>
    </ligand>
</feature>
<feature type="site" description="Transition state stabilizer" evidence="1">
    <location>
        <position position="18"/>
    </location>
</feature>
<name>COAD_BACAH</name>
<accession>A0RHU9</accession>
<proteinExistence type="inferred from homology"/>
<keyword id="KW-0067">ATP-binding</keyword>
<keyword id="KW-0173">Coenzyme A biosynthesis</keyword>
<keyword id="KW-0963">Cytoplasm</keyword>
<keyword id="KW-0460">Magnesium</keyword>
<keyword id="KW-0547">Nucleotide-binding</keyword>
<keyword id="KW-0548">Nucleotidyltransferase</keyword>
<keyword id="KW-0808">Transferase</keyword>
<protein>
    <recommendedName>
        <fullName evidence="1">Phosphopantetheine adenylyltransferase</fullName>
        <ecNumber evidence="1">2.7.7.3</ecNumber>
    </recommendedName>
    <alternativeName>
        <fullName evidence="1">Dephospho-CoA pyrophosphorylase</fullName>
    </alternativeName>
    <alternativeName>
        <fullName evidence="1">Pantetheine-phosphate adenylyltransferase</fullName>
        <shortName evidence="1">PPAT</shortName>
    </alternativeName>
</protein>
<organism>
    <name type="scientific">Bacillus thuringiensis (strain Al Hakam)</name>
    <dbReference type="NCBI Taxonomy" id="412694"/>
    <lineage>
        <taxon>Bacteria</taxon>
        <taxon>Bacillati</taxon>
        <taxon>Bacillota</taxon>
        <taxon>Bacilli</taxon>
        <taxon>Bacillales</taxon>
        <taxon>Bacillaceae</taxon>
        <taxon>Bacillus</taxon>
        <taxon>Bacillus cereus group</taxon>
    </lineage>
</organism>